<protein>
    <recommendedName>
        <fullName evidence="1">Cysteine desulfurase</fullName>
        <ecNumber evidence="1">2.8.1.7</ecNumber>
    </recommendedName>
    <alternativeName>
        <fullName evidence="1">Selenocysteine beta-lyase</fullName>
        <shortName evidence="1">SCL</shortName>
    </alternativeName>
    <alternativeName>
        <fullName evidence="1">Selenocysteine lyase</fullName>
        <ecNumber evidence="1">4.4.1.16</ecNumber>
    </alternativeName>
    <alternativeName>
        <fullName evidence="1">Selenocysteine reductase</fullName>
    </alternativeName>
</protein>
<name>SUFS_ECO45</name>
<sequence length="406" mass="44422">MTFSVDKVRADFPVLSREVNGLPLAYLDSAASAQKPSQVIDAEAEFYRHGYAAVHRGIHTLSAQATEKMENVRKRASLFINARSAEELVFVRGTTEGINLVANSWGNSNVRAGDNIIISQMEHHANIVPWQMLCARVGAELRVIPLNPDGTLQLETLPTLFDEKTRLLAITHVSNVLGTENPLAEMITLAHQHGAKVLVDGAQAVMHHPVDVQALDCDFYVFSGHKLYGPTGIGILYVKEALLQEMPPWEGGGSMIATVSLSEGTTWTKAPWRFEAGTPNTGGIIGLGAALEYVSALGLNNIAEYEQNLMHYALSQLESVPDLTLYGPQNRLGVIAFNLGKHHAYDVGSFLDNYGIAVRTGHHCAMPLMAYYNVPAMCRASLAMYNTHEEVDRLVTGLQRIHRLLG</sequence>
<dbReference type="EC" id="2.8.1.7" evidence="1"/>
<dbReference type="EC" id="4.4.1.16" evidence="1"/>
<dbReference type="EMBL" id="CU928161">
    <property type="protein sequence ID" value="CAR03039.1"/>
    <property type="molecule type" value="Genomic_DNA"/>
</dbReference>
<dbReference type="RefSeq" id="WP_000144575.1">
    <property type="nucleotide sequence ID" value="NC_011742.1"/>
</dbReference>
<dbReference type="SMR" id="B7MA32"/>
<dbReference type="GeneID" id="75204526"/>
<dbReference type="KEGG" id="ecz:ECS88_1730"/>
<dbReference type="HOGENOM" id="CLU_003433_2_5_6"/>
<dbReference type="UniPathway" id="UPA00266"/>
<dbReference type="Proteomes" id="UP000000747">
    <property type="component" value="Chromosome"/>
</dbReference>
<dbReference type="GO" id="GO:0005737">
    <property type="term" value="C:cytoplasm"/>
    <property type="evidence" value="ECO:0007669"/>
    <property type="project" value="UniProtKB-SubCell"/>
</dbReference>
<dbReference type="GO" id="GO:0031071">
    <property type="term" value="F:cysteine desulfurase activity"/>
    <property type="evidence" value="ECO:0007669"/>
    <property type="project" value="UniProtKB-UniRule"/>
</dbReference>
<dbReference type="GO" id="GO:0030170">
    <property type="term" value="F:pyridoxal phosphate binding"/>
    <property type="evidence" value="ECO:0007669"/>
    <property type="project" value="InterPro"/>
</dbReference>
<dbReference type="GO" id="GO:0009000">
    <property type="term" value="F:selenocysteine lyase activity"/>
    <property type="evidence" value="ECO:0007669"/>
    <property type="project" value="UniProtKB-UniRule"/>
</dbReference>
<dbReference type="GO" id="GO:0006534">
    <property type="term" value="P:cysteine metabolic process"/>
    <property type="evidence" value="ECO:0007669"/>
    <property type="project" value="InterPro"/>
</dbReference>
<dbReference type="CDD" id="cd06453">
    <property type="entry name" value="SufS_like"/>
    <property type="match status" value="1"/>
</dbReference>
<dbReference type="FunFam" id="3.40.640.10:FF:000042">
    <property type="entry name" value="Cysteine desulfurase"/>
    <property type="match status" value="1"/>
</dbReference>
<dbReference type="Gene3D" id="3.90.1150.10">
    <property type="entry name" value="Aspartate Aminotransferase, domain 1"/>
    <property type="match status" value="1"/>
</dbReference>
<dbReference type="Gene3D" id="3.40.640.10">
    <property type="entry name" value="Type I PLP-dependent aspartate aminotransferase-like (Major domain)"/>
    <property type="match status" value="1"/>
</dbReference>
<dbReference type="HAMAP" id="MF_01831">
    <property type="entry name" value="SufS_aminotrans_5"/>
    <property type="match status" value="1"/>
</dbReference>
<dbReference type="InterPro" id="IPR000192">
    <property type="entry name" value="Aminotrans_V_dom"/>
</dbReference>
<dbReference type="InterPro" id="IPR020578">
    <property type="entry name" value="Aminotrans_V_PyrdxlP_BS"/>
</dbReference>
<dbReference type="InterPro" id="IPR010970">
    <property type="entry name" value="Cys_dSase_SufS"/>
</dbReference>
<dbReference type="InterPro" id="IPR015424">
    <property type="entry name" value="PyrdxlP-dep_Trfase"/>
</dbReference>
<dbReference type="InterPro" id="IPR015421">
    <property type="entry name" value="PyrdxlP-dep_Trfase_major"/>
</dbReference>
<dbReference type="InterPro" id="IPR015422">
    <property type="entry name" value="PyrdxlP-dep_Trfase_small"/>
</dbReference>
<dbReference type="NCBIfam" id="NF006791">
    <property type="entry name" value="PRK09295.1"/>
    <property type="match status" value="1"/>
</dbReference>
<dbReference type="NCBIfam" id="TIGR01979">
    <property type="entry name" value="sufS"/>
    <property type="match status" value="1"/>
</dbReference>
<dbReference type="PANTHER" id="PTHR43586">
    <property type="entry name" value="CYSTEINE DESULFURASE"/>
    <property type="match status" value="1"/>
</dbReference>
<dbReference type="PANTHER" id="PTHR43586:SF25">
    <property type="entry name" value="CYSTEINE DESULFURASE"/>
    <property type="match status" value="1"/>
</dbReference>
<dbReference type="Pfam" id="PF00266">
    <property type="entry name" value="Aminotran_5"/>
    <property type="match status" value="1"/>
</dbReference>
<dbReference type="SUPFAM" id="SSF53383">
    <property type="entry name" value="PLP-dependent transferases"/>
    <property type="match status" value="1"/>
</dbReference>
<dbReference type="PROSITE" id="PS00595">
    <property type="entry name" value="AA_TRANSFER_CLASS_5"/>
    <property type="match status" value="1"/>
</dbReference>
<comment type="function">
    <text evidence="1">Cysteine desulfurases mobilize the sulfur from L-cysteine to yield L-alanine, an essential step in sulfur metabolism for biosynthesis of a variety of sulfur-containing biomolecules. Component of the suf operon, which is activated and required under specific conditions such as oxidative stress and iron limitation. Acts as a potent selenocysteine lyase in vitro, that mobilizes selenium from L-selenocysteine. Selenocysteine lyase activity is however unsure in vivo.</text>
</comment>
<comment type="catalytic activity">
    <reaction evidence="1">
        <text>(sulfur carrier)-H + L-cysteine = (sulfur carrier)-SH + L-alanine</text>
        <dbReference type="Rhea" id="RHEA:43892"/>
        <dbReference type="Rhea" id="RHEA-COMP:14737"/>
        <dbReference type="Rhea" id="RHEA-COMP:14739"/>
        <dbReference type="ChEBI" id="CHEBI:29917"/>
        <dbReference type="ChEBI" id="CHEBI:35235"/>
        <dbReference type="ChEBI" id="CHEBI:57972"/>
        <dbReference type="ChEBI" id="CHEBI:64428"/>
        <dbReference type="EC" id="2.8.1.7"/>
    </reaction>
</comment>
<comment type="catalytic activity">
    <reaction evidence="1">
        <text>L-selenocysteine + AH2 = hydrogenselenide + L-alanine + A + H(+)</text>
        <dbReference type="Rhea" id="RHEA:11632"/>
        <dbReference type="ChEBI" id="CHEBI:13193"/>
        <dbReference type="ChEBI" id="CHEBI:15378"/>
        <dbReference type="ChEBI" id="CHEBI:17499"/>
        <dbReference type="ChEBI" id="CHEBI:29317"/>
        <dbReference type="ChEBI" id="CHEBI:57843"/>
        <dbReference type="ChEBI" id="CHEBI:57972"/>
        <dbReference type="EC" id="4.4.1.16"/>
    </reaction>
</comment>
<comment type="cofactor">
    <cofactor evidence="1">
        <name>pyridoxal 5'-phosphate</name>
        <dbReference type="ChEBI" id="CHEBI:597326"/>
    </cofactor>
</comment>
<comment type="pathway">
    <text evidence="1">Cofactor biosynthesis; iron-sulfur cluster biosynthesis.</text>
</comment>
<comment type="subunit">
    <text evidence="1">Homodimer. Interacts with SufE and the SufBCD complex composed of SufB, SufC and SufD. The interaction with SufE is required to mediate the direct transfer of the sulfur atom from the S-sulfanylcysteine.</text>
</comment>
<comment type="subcellular location">
    <subcellularLocation>
        <location evidence="1">Cytoplasm</location>
    </subcellularLocation>
</comment>
<comment type="similarity">
    <text evidence="1">Belongs to the class-V pyridoxal-phosphate-dependent aminotransferase family. Csd subfamily.</text>
</comment>
<gene>
    <name evidence="1" type="primary">sufS</name>
    <name type="ordered locus">ECS88_1730</name>
</gene>
<accession>B7MA32</accession>
<organism>
    <name type="scientific">Escherichia coli O45:K1 (strain S88 / ExPEC)</name>
    <dbReference type="NCBI Taxonomy" id="585035"/>
    <lineage>
        <taxon>Bacteria</taxon>
        <taxon>Pseudomonadati</taxon>
        <taxon>Pseudomonadota</taxon>
        <taxon>Gammaproteobacteria</taxon>
        <taxon>Enterobacterales</taxon>
        <taxon>Enterobacteriaceae</taxon>
        <taxon>Escherichia</taxon>
    </lineage>
</organism>
<proteinExistence type="inferred from homology"/>
<feature type="chain" id="PRO_1000188292" description="Cysteine desulfurase">
    <location>
        <begin position="1"/>
        <end position="406"/>
    </location>
</feature>
<feature type="active site" description="Cysteine persulfide intermediate" evidence="1">
    <location>
        <position position="364"/>
    </location>
</feature>
<feature type="modified residue" description="N6-(pyridoxal phosphate)lysine" evidence="1">
    <location>
        <position position="226"/>
    </location>
</feature>
<evidence type="ECO:0000255" key="1">
    <source>
        <dbReference type="HAMAP-Rule" id="MF_01831"/>
    </source>
</evidence>
<keyword id="KW-0963">Cytoplasm</keyword>
<keyword id="KW-0456">Lyase</keyword>
<keyword id="KW-0663">Pyridoxal phosphate</keyword>
<keyword id="KW-1185">Reference proteome</keyword>
<keyword id="KW-0808">Transferase</keyword>
<reference key="1">
    <citation type="journal article" date="2009" name="PLoS Genet.">
        <title>Organised genome dynamics in the Escherichia coli species results in highly diverse adaptive paths.</title>
        <authorList>
            <person name="Touchon M."/>
            <person name="Hoede C."/>
            <person name="Tenaillon O."/>
            <person name="Barbe V."/>
            <person name="Baeriswyl S."/>
            <person name="Bidet P."/>
            <person name="Bingen E."/>
            <person name="Bonacorsi S."/>
            <person name="Bouchier C."/>
            <person name="Bouvet O."/>
            <person name="Calteau A."/>
            <person name="Chiapello H."/>
            <person name="Clermont O."/>
            <person name="Cruveiller S."/>
            <person name="Danchin A."/>
            <person name="Diard M."/>
            <person name="Dossat C."/>
            <person name="Karoui M.E."/>
            <person name="Frapy E."/>
            <person name="Garry L."/>
            <person name="Ghigo J.M."/>
            <person name="Gilles A.M."/>
            <person name="Johnson J."/>
            <person name="Le Bouguenec C."/>
            <person name="Lescat M."/>
            <person name="Mangenot S."/>
            <person name="Martinez-Jehanne V."/>
            <person name="Matic I."/>
            <person name="Nassif X."/>
            <person name="Oztas S."/>
            <person name="Petit M.A."/>
            <person name="Pichon C."/>
            <person name="Rouy Z."/>
            <person name="Ruf C.S."/>
            <person name="Schneider D."/>
            <person name="Tourret J."/>
            <person name="Vacherie B."/>
            <person name="Vallenet D."/>
            <person name="Medigue C."/>
            <person name="Rocha E.P.C."/>
            <person name="Denamur E."/>
        </authorList>
    </citation>
    <scope>NUCLEOTIDE SEQUENCE [LARGE SCALE GENOMIC DNA]</scope>
    <source>
        <strain>S88 / ExPEC</strain>
    </source>
</reference>